<evidence type="ECO:0000255" key="1">
    <source>
        <dbReference type="HAMAP-Rule" id="MF_00672"/>
    </source>
</evidence>
<evidence type="ECO:0000256" key="2">
    <source>
        <dbReference type="SAM" id="MobiDB-lite"/>
    </source>
</evidence>
<sequence length="538" mass="60324">MEKLLKKLPFYDHTWFNFLRFLIGNFIKDDGQQKAASLTYTTLLSIVPILTVLLMILSSVPALESVREQISNIIYSNLLPQSGLQVSEYINNFAEKSSNLTAIGALALFVTTIMTLTTIERAFNQIWRVEDRSGGIKSIVRYWTIITLGPLVLGTAFLVSSAVQSLSFLNQQVAGYGIDWGFWVQVVSFAVTIAGFIGMYWFIPKAKVPLKNAAIAGVFVAVTFELLKYSFGIIMSNFTSYEAIYGAFAALPIFLLWIYLSWNLILLGVEISYTLTIFATSEVYPRHPLLSLLDMLNLVHDRYQQGKDTSEEDLRSVLGRKELPKWFTYLNYLKDAHLITETDEGNYVLKKDLDNITLWEFYRTLPYPLPIKDELDEVCANARTPWLSLLVQRFVQTEKHARQELDIPLAKIFAHSLPREKVEVSHSVFSAQDADAKRTTSQSTTAEGGRQSAAEDGKFDAQPFDPNADVLPDSDSKEATNPPDADIKAAAAKGTVNSAQHSKHTETAKQEHKKTGLLGLFSHDKDAPIITEDDNPNK</sequence>
<reference key="1">
    <citation type="submission" date="2007-05" db="EMBL/GenBank/DDBJ databases">
        <title>Complete sequence of chromosome of Psychrobacter sp. PRwf-1.</title>
        <authorList>
            <consortium name="US DOE Joint Genome Institute"/>
            <person name="Copeland A."/>
            <person name="Lucas S."/>
            <person name="Lapidus A."/>
            <person name="Barry K."/>
            <person name="Detter J.C."/>
            <person name="Glavina del Rio T."/>
            <person name="Hammon N."/>
            <person name="Israni S."/>
            <person name="Dalin E."/>
            <person name="Tice H."/>
            <person name="Pitluck S."/>
            <person name="Chain P."/>
            <person name="Malfatti S."/>
            <person name="Shin M."/>
            <person name="Vergez L."/>
            <person name="Schmutz J."/>
            <person name="Larimer F."/>
            <person name="Land M."/>
            <person name="Hauser L."/>
            <person name="Kyrpides N."/>
            <person name="Kim E."/>
            <person name="Tiedje J."/>
            <person name="Richardson P."/>
        </authorList>
    </citation>
    <scope>NUCLEOTIDE SEQUENCE [LARGE SCALE GENOMIC DNA]</scope>
    <source>
        <strain>PRwf-1</strain>
    </source>
</reference>
<keyword id="KW-0997">Cell inner membrane</keyword>
<keyword id="KW-1003">Cell membrane</keyword>
<keyword id="KW-0472">Membrane</keyword>
<keyword id="KW-0812">Transmembrane</keyword>
<keyword id="KW-1133">Transmembrane helix</keyword>
<proteinExistence type="inferred from homology"/>
<protein>
    <recommendedName>
        <fullName evidence="1">UPF0761 membrane protein PsycPRwf_0630</fullName>
    </recommendedName>
</protein>
<accession>A5WD44</accession>
<comment type="subcellular location">
    <subcellularLocation>
        <location evidence="1">Cell inner membrane</location>
        <topology evidence="1">Multi-pass membrane protein</topology>
    </subcellularLocation>
</comment>
<comment type="similarity">
    <text evidence="1">Belongs to the UPF0761 family.</text>
</comment>
<dbReference type="EMBL" id="CP000713">
    <property type="protein sequence ID" value="ABQ93585.1"/>
    <property type="molecule type" value="Genomic_DNA"/>
</dbReference>
<dbReference type="SMR" id="A5WD44"/>
<dbReference type="STRING" id="349106.PsycPRwf_0630"/>
<dbReference type="KEGG" id="prw:PsycPRwf_0630"/>
<dbReference type="eggNOG" id="COG1295">
    <property type="taxonomic scope" value="Bacteria"/>
</dbReference>
<dbReference type="HOGENOM" id="CLU_032288_1_1_6"/>
<dbReference type="GO" id="GO:0005886">
    <property type="term" value="C:plasma membrane"/>
    <property type="evidence" value="ECO:0007669"/>
    <property type="project" value="UniProtKB-SubCell"/>
</dbReference>
<dbReference type="HAMAP" id="MF_00672">
    <property type="entry name" value="UPF0761"/>
    <property type="match status" value="1"/>
</dbReference>
<dbReference type="InterPro" id="IPR023679">
    <property type="entry name" value="UPF0761_bac"/>
</dbReference>
<dbReference type="InterPro" id="IPR017039">
    <property type="entry name" value="Virul_fac_BrkB"/>
</dbReference>
<dbReference type="NCBIfam" id="TIGR00765">
    <property type="entry name" value="yihY_not_rbn"/>
    <property type="match status" value="1"/>
</dbReference>
<dbReference type="PANTHER" id="PTHR30213">
    <property type="entry name" value="INNER MEMBRANE PROTEIN YHJD"/>
    <property type="match status" value="1"/>
</dbReference>
<dbReference type="PANTHER" id="PTHR30213:SF0">
    <property type="entry name" value="UPF0761 MEMBRANE PROTEIN YIHY"/>
    <property type="match status" value="1"/>
</dbReference>
<dbReference type="Pfam" id="PF03631">
    <property type="entry name" value="Virul_fac_BrkB"/>
    <property type="match status" value="1"/>
</dbReference>
<name>Y630_PSYWF</name>
<feature type="chain" id="PRO_0000391048" description="UPF0761 membrane protein PsycPRwf_0630">
    <location>
        <begin position="1"/>
        <end position="538"/>
    </location>
</feature>
<feature type="transmembrane region" description="Helical" evidence="1">
    <location>
        <begin position="43"/>
        <end position="63"/>
    </location>
</feature>
<feature type="transmembrane region" description="Helical" evidence="1">
    <location>
        <begin position="100"/>
        <end position="120"/>
    </location>
</feature>
<feature type="transmembrane region" description="Helical" evidence="1">
    <location>
        <begin position="143"/>
        <end position="163"/>
    </location>
</feature>
<feature type="transmembrane region" description="Helical" evidence="1">
    <location>
        <begin position="183"/>
        <end position="203"/>
    </location>
</feature>
<feature type="transmembrane region" description="Helical" evidence="1">
    <location>
        <begin position="215"/>
        <end position="235"/>
    </location>
</feature>
<feature type="transmembrane region" description="Helical" evidence="1">
    <location>
        <begin position="247"/>
        <end position="267"/>
    </location>
</feature>
<feature type="region of interest" description="Disordered" evidence="2">
    <location>
        <begin position="427"/>
        <end position="538"/>
    </location>
</feature>
<feature type="compositionally biased region" description="Low complexity" evidence="2">
    <location>
        <begin position="482"/>
        <end position="493"/>
    </location>
</feature>
<feature type="compositionally biased region" description="Basic and acidic residues" evidence="2">
    <location>
        <begin position="503"/>
        <end position="514"/>
    </location>
</feature>
<gene>
    <name type="ordered locus">PsycPRwf_0630</name>
</gene>
<organism>
    <name type="scientific">Psychrobacter sp. (strain PRwf-1)</name>
    <dbReference type="NCBI Taxonomy" id="349106"/>
    <lineage>
        <taxon>Bacteria</taxon>
        <taxon>Pseudomonadati</taxon>
        <taxon>Pseudomonadota</taxon>
        <taxon>Gammaproteobacteria</taxon>
        <taxon>Moraxellales</taxon>
        <taxon>Moraxellaceae</taxon>
        <taxon>Psychrobacter</taxon>
    </lineage>
</organism>